<proteinExistence type="evidence at protein level"/>
<comment type="function">
    <text>This is a copper-containing oxidase that functions in the formation of pigments such as melanins and other polyphenolic compounds. Catalyzes the rate-limiting conversions of tyrosine to DOPA, DOPA to DOPA-quinone and possibly 5,6 dihydroxyindole to indole-5'6 quinone.</text>
</comment>
<comment type="catalytic activity">
    <reaction>
        <text>2 L-dopa + O2 = 2 L-dopaquinone + 2 H2O</text>
        <dbReference type="Rhea" id="RHEA:34287"/>
        <dbReference type="ChEBI" id="CHEBI:15377"/>
        <dbReference type="ChEBI" id="CHEBI:15379"/>
        <dbReference type="ChEBI" id="CHEBI:57504"/>
        <dbReference type="ChEBI" id="CHEBI:57924"/>
        <dbReference type="EC" id="1.14.18.1"/>
    </reaction>
</comment>
<comment type="catalytic activity">
    <reaction>
        <text>L-tyrosine + O2 = L-dopaquinone + H2O</text>
        <dbReference type="Rhea" id="RHEA:18117"/>
        <dbReference type="ChEBI" id="CHEBI:15377"/>
        <dbReference type="ChEBI" id="CHEBI:15379"/>
        <dbReference type="ChEBI" id="CHEBI:57924"/>
        <dbReference type="ChEBI" id="CHEBI:58315"/>
        <dbReference type="EC" id="1.14.18.1"/>
    </reaction>
</comment>
<comment type="cofactor">
    <cofactor evidence="1">
        <name>Cu(2+)</name>
        <dbReference type="ChEBI" id="CHEBI:29036"/>
    </cofactor>
    <text evidence="1">Binds 2 copper ions per subunit.</text>
</comment>
<comment type="subunit">
    <text evidence="5">Heterodimer.</text>
</comment>
<comment type="subcellular location">
    <subcellularLocation>
        <location>Secreted</location>
    </subcellularLocation>
</comment>
<comment type="tissue specificity">
    <text evidence="7">Synthesized by hemocytes and released into the hemolymph plasma.</text>
</comment>
<comment type="PTM">
    <text evidence="5">The N-terminus is blocked.</text>
</comment>
<comment type="mass spectrometry" mass="78880.0" method="MALDI" evidence="6"/>
<comment type="similarity">
    <text evidence="8">Belongs to the tyrosinase family.</text>
</comment>
<protein>
    <recommendedName>
        <fullName>Phenoloxidase subunit 1</fullName>
        <ecNumber>1.14.18.1</ecNumber>
    </recommendedName>
    <alternativeName>
        <fullName>PO 1</fullName>
    </alternativeName>
    <alternativeName>
        <fullName>Tyrosinase 1</fullName>
    </alternativeName>
</protein>
<feature type="propeptide" id="PRO_0000035899" evidence="5">
    <location>
        <begin position="1"/>
        <end position="51"/>
    </location>
</feature>
<feature type="chain" id="PRO_0000035900" description="Phenoloxidase subunit 1">
    <location>
        <begin position="52"/>
        <end position="685"/>
    </location>
</feature>
<feature type="active site" description="Proton acceptor" evidence="2">
    <location>
        <position position="351"/>
    </location>
</feature>
<feature type="binding site" evidence="3">
    <location>
        <position position="209"/>
    </location>
    <ligand>
        <name>Cu cation</name>
        <dbReference type="ChEBI" id="CHEBI:23378"/>
        <label>A</label>
    </ligand>
</feature>
<feature type="binding site" evidence="3">
    <location>
        <position position="213"/>
    </location>
    <ligand>
        <name>Cu cation</name>
        <dbReference type="ChEBI" id="CHEBI:23378"/>
        <label>A</label>
    </ligand>
</feature>
<feature type="binding site" evidence="3">
    <location>
        <position position="239"/>
    </location>
    <ligand>
        <name>Cu cation</name>
        <dbReference type="ChEBI" id="CHEBI:23378"/>
        <label>A</label>
    </ligand>
</feature>
<feature type="binding site" evidence="3">
    <location>
        <position position="366"/>
    </location>
    <ligand>
        <name>Cu cation</name>
        <dbReference type="ChEBI" id="CHEBI:23378"/>
        <label>B</label>
    </ligand>
</feature>
<feature type="binding site" evidence="3">
    <location>
        <position position="370"/>
    </location>
    <ligand>
        <name>Cu cation</name>
        <dbReference type="ChEBI" id="CHEBI:23378"/>
        <label>B</label>
    </ligand>
</feature>
<feature type="binding site" evidence="3">
    <location>
        <position position="406"/>
    </location>
    <ligand>
        <name>Cu cation</name>
        <dbReference type="ChEBI" id="CHEBI:23378"/>
        <label>B</label>
    </ligand>
</feature>
<feature type="glycosylation site" description="N-linked (GlcNAc...) asparagine" evidence="4">
    <location>
        <position position="184"/>
    </location>
</feature>
<feature type="glycosylation site" description="N-linked (GlcNAc...) asparagine" evidence="4">
    <location>
        <position position="254"/>
    </location>
</feature>
<feature type="glycosylation site" description="N-linked (GlcNAc...) asparagine" evidence="4">
    <location>
        <position position="324"/>
    </location>
</feature>
<feature type="glycosylation site" description="N-linked (GlcNAc...) asparagine" evidence="4">
    <location>
        <position position="491"/>
    </location>
</feature>
<feature type="glycosylation site" description="N-linked (GlcNAc...) asparagine" evidence="4">
    <location>
        <position position="540"/>
    </location>
</feature>
<feature type="disulfide bond" evidence="3">
    <location>
        <begin position="581"/>
        <end position="623"/>
    </location>
</feature>
<feature type="disulfide bond" evidence="3">
    <location>
        <begin position="583"/>
        <end position="630"/>
    </location>
</feature>
<feature type="sequence conflict" description="In Ref. 1; AA sequence." evidence="8" ref="1">
    <original>V</original>
    <variation>A</variation>
    <location>
        <position position="171"/>
    </location>
</feature>
<name>PRP1_BOMMO</name>
<dbReference type="EC" id="1.14.18.1"/>
<dbReference type="EMBL" id="D49370">
    <property type="protein sequence ID" value="BAA08368.1"/>
    <property type="molecule type" value="mRNA"/>
</dbReference>
<dbReference type="RefSeq" id="NP_001037335.1">
    <property type="nucleotide sequence ID" value="NM_001043870.1"/>
</dbReference>
<dbReference type="SMR" id="Q27451"/>
<dbReference type="FunCoup" id="Q27451">
    <property type="interactions" value="17"/>
</dbReference>
<dbReference type="STRING" id="7091.Q27451"/>
<dbReference type="PaxDb" id="7091-BGIBMGA012763-TA"/>
<dbReference type="EnsemblMetazoa" id="NM_001043870.1">
    <property type="protein sequence ID" value="NP_001037335.1"/>
    <property type="gene ID" value="GeneID_692758"/>
</dbReference>
<dbReference type="GeneID" id="692758"/>
<dbReference type="KEGG" id="bmor:692758"/>
<dbReference type="CTD" id="37044"/>
<dbReference type="eggNOG" id="ENOG502QQCG">
    <property type="taxonomic scope" value="Eukaryota"/>
</dbReference>
<dbReference type="HOGENOM" id="CLU_012213_0_1_1"/>
<dbReference type="InParanoid" id="Q27451"/>
<dbReference type="Proteomes" id="UP000005204">
    <property type="component" value="Unassembled WGS sequence"/>
</dbReference>
<dbReference type="GO" id="GO:0005576">
    <property type="term" value="C:extracellular region"/>
    <property type="evidence" value="ECO:0000304"/>
    <property type="project" value="UniProtKB"/>
</dbReference>
<dbReference type="GO" id="GO:0046872">
    <property type="term" value="F:metal ion binding"/>
    <property type="evidence" value="ECO:0007669"/>
    <property type="project" value="UniProtKB-KW"/>
</dbReference>
<dbReference type="GO" id="GO:0004503">
    <property type="term" value="F:tyrosinase activity"/>
    <property type="evidence" value="ECO:0000304"/>
    <property type="project" value="UniProtKB"/>
</dbReference>
<dbReference type="GO" id="GO:0006952">
    <property type="term" value="P:defense response"/>
    <property type="evidence" value="ECO:0000304"/>
    <property type="project" value="UniProtKB"/>
</dbReference>
<dbReference type="GO" id="GO:0006583">
    <property type="term" value="P:melanin biosynthetic process from tyrosine"/>
    <property type="evidence" value="ECO:0000304"/>
    <property type="project" value="UniProtKB"/>
</dbReference>
<dbReference type="FunFam" id="1.10.1280.10:FF:000004">
    <property type="entry name" value="Hemocyanin subunit 2"/>
    <property type="match status" value="1"/>
</dbReference>
<dbReference type="FunFam" id="2.60.40.1520:FF:000001">
    <property type="entry name" value="Hemocyanin subunit 2"/>
    <property type="match status" value="1"/>
</dbReference>
<dbReference type="FunFam" id="1.20.1370.10:FF:000001">
    <property type="entry name" value="Phenoloxidase 2"/>
    <property type="match status" value="1"/>
</dbReference>
<dbReference type="Gene3D" id="1.10.1280.10">
    <property type="entry name" value="Di-copper center containing domain from catechol oxidase"/>
    <property type="match status" value="1"/>
</dbReference>
<dbReference type="Gene3D" id="2.60.40.1520">
    <property type="entry name" value="Hemocyanin, C-terminal domain"/>
    <property type="match status" value="1"/>
</dbReference>
<dbReference type="Gene3D" id="1.20.1370.10">
    <property type="entry name" value="Hemocyanin, N-terminal domain"/>
    <property type="match status" value="1"/>
</dbReference>
<dbReference type="InterPro" id="IPR008922">
    <property type="entry name" value="Di-copper_centre_dom_sf"/>
</dbReference>
<dbReference type="InterPro" id="IPR013788">
    <property type="entry name" value="Hemocyanin/hexamerin"/>
</dbReference>
<dbReference type="InterPro" id="IPR000896">
    <property type="entry name" value="Hemocyanin/hexamerin_mid_dom"/>
</dbReference>
<dbReference type="InterPro" id="IPR005203">
    <property type="entry name" value="Hemocyanin_C"/>
</dbReference>
<dbReference type="InterPro" id="IPR037020">
    <property type="entry name" value="Hemocyanin_C_sf"/>
</dbReference>
<dbReference type="InterPro" id="IPR005204">
    <property type="entry name" value="Hemocyanin_N"/>
</dbReference>
<dbReference type="InterPro" id="IPR036697">
    <property type="entry name" value="Hemocyanin_N_sf"/>
</dbReference>
<dbReference type="InterPro" id="IPR014756">
    <property type="entry name" value="Ig_E-set"/>
</dbReference>
<dbReference type="InterPro" id="IPR002227">
    <property type="entry name" value="Tyrosinase_Cu-bd"/>
</dbReference>
<dbReference type="PANTHER" id="PTHR11511">
    <property type="entry name" value="LARVAL STORAGE PROTEIN/PHENOLOXIDASE"/>
    <property type="match status" value="1"/>
</dbReference>
<dbReference type="PANTHER" id="PTHR11511:SF4">
    <property type="entry name" value="PHENOLOXIDASE 2-RELATED"/>
    <property type="match status" value="1"/>
</dbReference>
<dbReference type="Pfam" id="PF03723">
    <property type="entry name" value="Hemocyanin_C"/>
    <property type="match status" value="1"/>
</dbReference>
<dbReference type="Pfam" id="PF00372">
    <property type="entry name" value="Hemocyanin_M"/>
    <property type="match status" value="1"/>
</dbReference>
<dbReference type="Pfam" id="PF03722">
    <property type="entry name" value="Hemocyanin_N"/>
    <property type="match status" value="1"/>
</dbReference>
<dbReference type="PRINTS" id="PR00187">
    <property type="entry name" value="HAEMOCYANIN"/>
</dbReference>
<dbReference type="SUPFAM" id="SSF48056">
    <property type="entry name" value="Di-copper centre-containing domain"/>
    <property type="match status" value="1"/>
</dbReference>
<dbReference type="SUPFAM" id="SSF81296">
    <property type="entry name" value="E set domains"/>
    <property type="match status" value="1"/>
</dbReference>
<dbReference type="SUPFAM" id="SSF48050">
    <property type="entry name" value="Hemocyanin, N-terminal domain"/>
    <property type="match status" value="1"/>
</dbReference>
<dbReference type="PROSITE" id="PS00209">
    <property type="entry name" value="HEMOCYANIN_1"/>
    <property type="match status" value="1"/>
</dbReference>
<dbReference type="PROSITE" id="PS00210">
    <property type="entry name" value="HEMOCYANIN_2"/>
    <property type="match status" value="1"/>
</dbReference>
<dbReference type="PROSITE" id="PS00498">
    <property type="entry name" value="TYROSINASE_2"/>
    <property type="match status" value="1"/>
</dbReference>
<sequence length="685" mass="78785">MSDAKNNLLLFFDRPSEPCFMQKGEENAVFEIPDNYYPEKYQRVSNAIGNRFGSDAGRMIPIRNIALPNLDLPMELPYNEQFSLFVPKHRKLAGRLIDIFMGMRDVEDLQSVCSYCQLRINPYMFNYCLSVAILHRPDTKGLSIPTFAESFPDKFMDPKVFRQAREVSSVVPSGARMPIVIPSNYTASDTEPEQRVAYFREDIGINLHHWHWHLVYPFDAADRAIVNKDRRGELFYYMHQQIIARYNVERMCNNLSRVRRYNNFRAAIEEGYFPKLDSTVASRAWPPRFAGTTIRDLDRPVDQIRSDVSELETWRDRFLQAIENMSVMLPNGRQLPLDEETGIDVLGNLMESSIISRNRPYYGDLHNMGHVFISYSHDPDHRHLEQFGVMGDSATAMRDPVFYRWHAYIDDIFHLYKYKLTPYGNDRLDFPNIRVSSVSIEGGGTPNTLNTLWEQSTVDLGRGMDFTPRGSVLARFTHLQHDEYNYVIEVNNTGGSSVMGMFRIFIAPTVDESGKPFSFDEQRKLMIELDKFSQGVKPGNNTIRRKSIDSSVTIPYERTFRNQADRPADPGTAGAAEFDFCGCGWPHHMLVPKGTTQGYPMVLFVMVSNWNDDRVEQDLVGSCNDAASYCGIRDRKYPDRRAMGFPFDRPAPAATTLSDFLRPNMAVRDCIVRFTDRTRQRGQQG</sequence>
<keyword id="KW-0186">Copper</keyword>
<keyword id="KW-0903">Direct protein sequencing</keyword>
<keyword id="KW-1015">Disulfide bond</keyword>
<keyword id="KW-0325">Glycoprotein</keyword>
<keyword id="KW-0470">Melanin biosynthesis</keyword>
<keyword id="KW-0479">Metal-binding</keyword>
<keyword id="KW-0503">Monooxygenase</keyword>
<keyword id="KW-0560">Oxidoreductase</keyword>
<keyword id="KW-1185">Reference proteome</keyword>
<keyword id="KW-0964">Secreted</keyword>
<keyword id="KW-0865">Zymogen</keyword>
<accession>Q27451</accession>
<evidence type="ECO:0000250" key="1">
    <source>
        <dbReference type="UniProtKB" id="P04253"/>
    </source>
</evidence>
<evidence type="ECO:0000250" key="2">
    <source>
        <dbReference type="UniProtKB" id="Q8MZM3"/>
    </source>
</evidence>
<evidence type="ECO:0000250" key="3">
    <source>
        <dbReference type="UniProtKB" id="Q9ZP19"/>
    </source>
</evidence>
<evidence type="ECO:0000255" key="4"/>
<evidence type="ECO:0000269" key="5">
    <source>
    </source>
</evidence>
<evidence type="ECO:0000269" key="6">
    <source>
    </source>
</evidence>
<evidence type="ECO:0000303" key="7">
    <source>
    </source>
</evidence>
<evidence type="ECO:0000305" key="8"/>
<evidence type="ECO:0000312" key="9">
    <source>
        <dbReference type="EMBL" id="BAA08368.1"/>
    </source>
</evidence>
<organism evidence="9">
    <name type="scientific">Bombyx mori</name>
    <name type="common">Silk moth</name>
    <dbReference type="NCBI Taxonomy" id="7091"/>
    <lineage>
        <taxon>Eukaryota</taxon>
        <taxon>Metazoa</taxon>
        <taxon>Ecdysozoa</taxon>
        <taxon>Arthropoda</taxon>
        <taxon>Hexapoda</taxon>
        <taxon>Insecta</taxon>
        <taxon>Pterygota</taxon>
        <taxon>Neoptera</taxon>
        <taxon>Endopterygota</taxon>
        <taxon>Lepidoptera</taxon>
        <taxon>Glossata</taxon>
        <taxon>Ditrysia</taxon>
        <taxon>Bombycoidea</taxon>
        <taxon>Bombycidae</taxon>
        <taxon>Bombycinae</taxon>
        <taxon>Bombyx</taxon>
    </lineage>
</organism>
<reference evidence="8" key="1">
    <citation type="journal article" date="1995" name="Proc. Natl. Acad. Sci. U.S.A.">
        <title>Molecular cloning of insect pro-phenol oxidase: a copper-containing protein homologous to arthropod hemocyanin.</title>
        <authorList>
            <person name="Kawabata T."/>
            <person name="Yasuhara Y."/>
            <person name="Ochiai M."/>
            <person name="Matsuura S."/>
            <person name="Ashida M."/>
        </authorList>
    </citation>
    <scope>NUCLEOTIDE SEQUENCE [MRNA]</scope>
    <scope>PARTIAL PROTEIN SEQUENCE</scope>
    <source>
        <strain evidence="5">Kinshu X Showa</strain>
        <tissue evidence="5">Hemocyte</tissue>
    </source>
</reference>
<reference evidence="8" key="2">
    <citation type="journal article" date="1995" name="Arch. Biochem. Biophys.">
        <title>Reexamination of properties of phenoloxidase isolated from larval hemolymph of the silkworm Bombyx mori.</title>
        <authorList>
            <person name="Yasuhara Y."/>
            <person name="Koizumi Y."/>
            <person name="Katagiri C."/>
            <person name="Ashida M."/>
        </authorList>
    </citation>
    <scope>MASS SPECTROMETRY</scope>
    <source>
        <tissue evidence="6">Hemocyte</tissue>
    </source>
</reference>